<protein>
    <recommendedName>
        <fullName>Acyl-homoserine lactone acylase PvdQ</fullName>
        <shortName>AHL acylase PvdQ</shortName>
        <shortName>Acyl-HSL acylase PvdQ</shortName>
        <ecNumber>3.5.1.97</ecNumber>
    </recommendedName>
    <component>
        <recommendedName>
            <fullName>Acyl-homoserine lactone acylase PvdQ subunit alpha</fullName>
            <shortName>Acyl-HSL acylase PvdQ subunit alpha</shortName>
        </recommendedName>
    </component>
    <component>
        <recommendedName>
            <fullName>Acyl-homoserine lactone acylase PvdQ subunit beta</fullName>
            <shortName>Acyl-HSL acylase PvdQ subunit beta</shortName>
        </recommendedName>
    </component>
</protein>
<reference key="1">
    <citation type="journal article" date="2005" name="Proc. Natl. Acad. Sci. U.S.A.">
        <title>Comparison of the complete genome sequences of Pseudomonas syringae pv. syringae B728a and pv. tomato DC3000.</title>
        <authorList>
            <person name="Feil H."/>
            <person name="Feil W.S."/>
            <person name="Chain P."/>
            <person name="Larimer F."/>
            <person name="Dibartolo G."/>
            <person name="Copeland A."/>
            <person name="Lykidis A."/>
            <person name="Trong S."/>
            <person name="Nolan M."/>
            <person name="Goltsman E."/>
            <person name="Thiel J."/>
            <person name="Malfatti S."/>
            <person name="Loper J.E."/>
            <person name="Lapidus A."/>
            <person name="Detter J.C."/>
            <person name="Land M."/>
            <person name="Richardson P.M."/>
            <person name="Kyrpides N.C."/>
            <person name="Ivanova N."/>
            <person name="Lindow S.E."/>
        </authorList>
    </citation>
    <scope>NUCLEOTIDE SEQUENCE [LARGE SCALE GENOMIC DNA]</scope>
    <source>
        <strain>B728a</strain>
    </source>
</reference>
<accession>Q4ZV08</accession>
<proteinExistence type="inferred from homology"/>
<evidence type="ECO:0000250" key="1"/>
<evidence type="ECO:0000255" key="2"/>
<evidence type="ECO:0000256" key="3">
    <source>
        <dbReference type="SAM" id="MobiDB-lite"/>
    </source>
</evidence>
<evidence type="ECO:0000305" key="4"/>
<organism>
    <name type="scientific">Pseudomonas syringae pv. syringae (strain B728a)</name>
    <dbReference type="NCBI Taxonomy" id="205918"/>
    <lineage>
        <taxon>Bacteria</taxon>
        <taxon>Pseudomonadati</taxon>
        <taxon>Pseudomonadota</taxon>
        <taxon>Gammaproteobacteria</taxon>
        <taxon>Pseudomonadales</taxon>
        <taxon>Pseudomonadaceae</taxon>
        <taxon>Pseudomonas</taxon>
        <taxon>Pseudomonas syringae</taxon>
    </lineage>
</organism>
<gene>
    <name type="primary">pvdQ</name>
    <name type="ordered locus">Psyr_1971</name>
</gene>
<name>PVDQ_PSEU2</name>
<sequence length="779" mass="84673">MIISRPLCSFVFAGLSFAVILPAQALVEPGNQAARAEIRRTGFGVPHIVAANERGLGYGIGYAYAQDNLCLLANEVVTVNGQRSRYFGPDKATLEQRNNMASDLLFQWLNTPQALADFWNAQPREIRQLMQGYVAGYNRSLAEQTTQGLPQPCAAEWVRPISTDDLLRLTRRLLVEGGVGQFAEALAGATPPAQQKPLQVDAQQAQALQLAAARNQRFALERGSNAVAIGRELSANGRGMLLANPHFPWGGGMRFYQMHLTIPGKLDVMGAALPGLPLINIGFNQHLAWSHTVDTSKHFTLHRLQLDPKDSTRYLLDGQSVAMGKQQVSVDVKQADGSLKSVPRIVYSSIFGPVVQWPGKLDWDSKFAFSLRDANLQNDRVLQQWYAMDKADSLKAFQDSVRKIQGIPWVNTLAVDAQGQALYMNLSVVPNVDAARLARCSDPRIGTELIVLDGSRSECNWEVSAEAAQAGIYPSSRQPQLLRTDFVQHSNDSAWMVNPAAPLQGFSPLISQDGQPLGQRARFALDRLESLKTAGKISVENLQAMVMDNEVYQAGQVLPDLLTFCASELGDDAARLAPLCAALKDWDGRADLNSGIGFVYFQKIMTSMQAVASRWRVAFDPQDPVHTPSGLAIENPSVATALRAAMLAAVDDVAKAGLPAGSKWGDIQVSSISGKQIPIHGGPAGLGVYNAMQTVAGKDGKREVVSGTSYLQVVTFDEQGPKAQGLLAFSESSNPQSAHSSDQTEAFSKKQWQALPFTEQQIKADPAYEVQVISEEPDR</sequence>
<feature type="signal peptide" evidence="2">
    <location>
        <begin position="1"/>
        <end position="25"/>
    </location>
</feature>
<feature type="chain" id="PRO_0000253373" description="Acyl-homoserine lactone acylase PvdQ">
    <location>
        <begin position="26"/>
        <end position="779"/>
    </location>
</feature>
<feature type="chain" id="PRO_0000253374" description="Acyl-homoserine lactone acylase PvdQ subunit alpha">
    <location>
        <begin position="26"/>
        <end position="201" status="uncertain"/>
    </location>
</feature>
<feature type="propeptide" id="PRO_0000253375" description="Spacer peptide" evidence="1">
    <location>
        <begin position="202" status="uncertain"/>
        <end position="223"/>
    </location>
</feature>
<feature type="chain" id="PRO_0000253376" description="Acyl-homoserine lactone acylase PvdQ subunit beta">
    <location>
        <begin position="224"/>
        <end position="779"/>
    </location>
</feature>
<feature type="region of interest" description="Disordered" evidence="3">
    <location>
        <begin position="731"/>
        <end position="750"/>
    </location>
</feature>
<feature type="compositionally biased region" description="Polar residues" evidence="3">
    <location>
        <begin position="731"/>
        <end position="746"/>
    </location>
</feature>
<feature type="active site" description="Nucleophile" evidence="1">
    <location>
        <position position="224"/>
    </location>
</feature>
<comment type="function">
    <text evidence="1">Catalyzes the deacylation of acyl-homoserine lactone (AHL or acyl-HSL), releasing homoserine lactone (HSL) and the corresponding fatty acid. Possesses a specificity for the degradation of long-chain acyl-HSLs (side chains of 11 to 14 carbons in length) (By similarity).</text>
</comment>
<comment type="catalytic activity">
    <reaction>
        <text>an N-acyl-L-homoserine lactone + H2O = L-homoserine lactone + a carboxylate</text>
        <dbReference type="Rhea" id="RHEA:18937"/>
        <dbReference type="ChEBI" id="CHEBI:15377"/>
        <dbReference type="ChEBI" id="CHEBI:29067"/>
        <dbReference type="ChEBI" id="CHEBI:55474"/>
        <dbReference type="ChEBI" id="CHEBI:58633"/>
        <dbReference type="EC" id="3.5.1.97"/>
    </reaction>
</comment>
<comment type="subunit">
    <text evidence="1">Heterodimer of an alpha subunit and a beta subunit processed from the same precursor.</text>
</comment>
<comment type="subcellular location">
    <subcellularLocation>
        <location evidence="1">Periplasm</location>
    </subcellularLocation>
</comment>
<comment type="miscellaneous">
    <text>AHL-mediated signaling mediates quorum sensing in many species of Proteobacteria, regulating hundreds of genes, including many that code for extracellular virulence factors.</text>
</comment>
<comment type="similarity">
    <text evidence="4">Belongs to the peptidase S45 family.</text>
</comment>
<dbReference type="EC" id="3.5.1.97"/>
<dbReference type="EMBL" id="CP000075">
    <property type="protein sequence ID" value="AAY37014.1"/>
    <property type="molecule type" value="Genomic_DNA"/>
</dbReference>
<dbReference type="RefSeq" id="YP_235052.1">
    <property type="nucleotide sequence ID" value="NC_007005.1"/>
</dbReference>
<dbReference type="SMR" id="Q4ZV08"/>
<dbReference type="STRING" id="205918.Psyr_1971"/>
<dbReference type="MEROPS" id="S45.004"/>
<dbReference type="KEGG" id="psb:Psyr_1971"/>
<dbReference type="PATRIC" id="fig|205918.7.peg.2013"/>
<dbReference type="eggNOG" id="COG2366">
    <property type="taxonomic scope" value="Bacteria"/>
</dbReference>
<dbReference type="HOGENOM" id="CLU_017615_0_0_6"/>
<dbReference type="OrthoDB" id="9760084at2"/>
<dbReference type="BRENDA" id="3.5.1.97">
    <property type="organism ID" value="5193"/>
</dbReference>
<dbReference type="Proteomes" id="UP000000426">
    <property type="component" value="Chromosome"/>
</dbReference>
<dbReference type="GO" id="GO:0042597">
    <property type="term" value="C:periplasmic space"/>
    <property type="evidence" value="ECO:0007669"/>
    <property type="project" value="UniProtKB-SubCell"/>
</dbReference>
<dbReference type="GO" id="GO:0016811">
    <property type="term" value="F:hydrolase activity, acting on carbon-nitrogen (but not peptide) bonds, in linear amides"/>
    <property type="evidence" value="ECO:0007669"/>
    <property type="project" value="InterPro"/>
</dbReference>
<dbReference type="GO" id="GO:0017000">
    <property type="term" value="P:antibiotic biosynthetic process"/>
    <property type="evidence" value="ECO:0007669"/>
    <property type="project" value="InterPro"/>
</dbReference>
<dbReference type="GO" id="GO:0009372">
    <property type="term" value="P:quorum sensing"/>
    <property type="evidence" value="ECO:0007669"/>
    <property type="project" value="UniProtKB-KW"/>
</dbReference>
<dbReference type="CDD" id="cd01936">
    <property type="entry name" value="Ntn_CA"/>
    <property type="match status" value="1"/>
</dbReference>
<dbReference type="Gene3D" id="1.10.1400.10">
    <property type="match status" value="1"/>
</dbReference>
<dbReference type="Gene3D" id="2.30.120.10">
    <property type="match status" value="1"/>
</dbReference>
<dbReference type="Gene3D" id="3.60.20.10">
    <property type="entry name" value="Glutamine Phosphoribosylpyrophosphate, subunit 1, domain 1"/>
    <property type="match status" value="1"/>
</dbReference>
<dbReference type="Gene3D" id="1.10.439.10">
    <property type="entry name" value="Penicillin Amidohydrolase, domain 1"/>
    <property type="match status" value="1"/>
</dbReference>
<dbReference type="InterPro" id="IPR029055">
    <property type="entry name" value="Ntn_hydrolases_N"/>
</dbReference>
<dbReference type="InterPro" id="IPR043147">
    <property type="entry name" value="Penicillin_amidase_A-knob"/>
</dbReference>
<dbReference type="InterPro" id="IPR023343">
    <property type="entry name" value="Penicillin_amidase_dom1"/>
</dbReference>
<dbReference type="InterPro" id="IPR043146">
    <property type="entry name" value="Penicillin_amidase_N_B-knob"/>
</dbReference>
<dbReference type="InterPro" id="IPR002692">
    <property type="entry name" value="S45"/>
</dbReference>
<dbReference type="PANTHER" id="PTHR34218:SF3">
    <property type="entry name" value="ACYL-HOMOSERINE LACTONE ACYLASE PVDQ"/>
    <property type="match status" value="1"/>
</dbReference>
<dbReference type="PANTHER" id="PTHR34218">
    <property type="entry name" value="PEPTIDASE S45 PENICILLIN AMIDASE"/>
    <property type="match status" value="1"/>
</dbReference>
<dbReference type="Pfam" id="PF01804">
    <property type="entry name" value="Penicil_amidase"/>
    <property type="match status" value="1"/>
</dbReference>
<dbReference type="SUPFAM" id="SSF56235">
    <property type="entry name" value="N-terminal nucleophile aminohydrolases (Ntn hydrolases)"/>
    <property type="match status" value="1"/>
</dbReference>
<keyword id="KW-0378">Hydrolase</keyword>
<keyword id="KW-0574">Periplasm</keyword>
<keyword id="KW-0673">Quorum sensing</keyword>
<keyword id="KW-0732">Signal</keyword>
<keyword id="KW-0865">Zymogen</keyword>